<reference key="1">
    <citation type="journal article" date="1997" name="Biochim. Biophys. Acta">
        <title>A novel levansucrase-levanase gene cluster in Bacillus stearothermophilus ATCC12980.</title>
        <authorList>
            <person name="Li Y."/>
            <person name="Triccas J.A."/>
            <person name="Ferenci T."/>
        </authorList>
    </citation>
    <scope>NUCLEOTIDE SEQUENCE [GENOMIC DNA]</scope>
    <scope>FUNCTION</scope>
    <scope>TEMPERATURE DEPENDENCE</scope>
    <source>
        <strain>ATCC 12980 / DSM 22 / CCM 2062 / JCM 2501 / NBRC 12550 / NCIMB 8923 / NCTC 10339 / R-35646 / VKM B-510</strain>
    </source>
</reference>
<reference key="2">
    <citation type="journal article" date="1999" name="Mol. Biol. (Mosk.)">
        <title>Homologous locus of Bacillus subtilis and Bacillus stearothermophilus genomes containing levansucrase and levanase genes.</title>
        <authorList>
            <person name="Naumoff D.G."/>
        </authorList>
    </citation>
    <scope>IDENTIFICATION OF FRAMESHIFTS</scope>
</reference>
<dbReference type="EC" id="3.2.1.64"/>
<dbReference type="EMBL" id="U34875">
    <property type="protein sequence ID" value="AAB97112.1"/>
    <property type="status" value="ALT_FRAME"/>
    <property type="molecule type" value="Genomic_DNA"/>
</dbReference>
<dbReference type="SMR" id="P94469"/>
<dbReference type="CAZy" id="GH32">
    <property type="family name" value="Glycoside Hydrolase Family 32"/>
</dbReference>
<dbReference type="GO" id="GO:0005737">
    <property type="term" value="C:cytoplasm"/>
    <property type="evidence" value="ECO:0007669"/>
    <property type="project" value="TreeGrafter"/>
</dbReference>
<dbReference type="GO" id="GO:0016020">
    <property type="term" value="C:membrane"/>
    <property type="evidence" value="ECO:0007669"/>
    <property type="project" value="UniProtKB-SubCell"/>
</dbReference>
<dbReference type="GO" id="GO:0033912">
    <property type="term" value="F:2,6-beta-fructan 6-levanbiohydrolase activity"/>
    <property type="evidence" value="ECO:0007669"/>
    <property type="project" value="UniProtKB-EC"/>
</dbReference>
<dbReference type="GO" id="GO:0004575">
    <property type="term" value="F:sucrose alpha-glucosidase activity"/>
    <property type="evidence" value="ECO:0007669"/>
    <property type="project" value="TreeGrafter"/>
</dbReference>
<dbReference type="GO" id="GO:0005987">
    <property type="term" value="P:sucrose catabolic process"/>
    <property type="evidence" value="ECO:0007669"/>
    <property type="project" value="TreeGrafter"/>
</dbReference>
<dbReference type="CDD" id="cd18622">
    <property type="entry name" value="GH32_Inu-like"/>
    <property type="match status" value="1"/>
</dbReference>
<dbReference type="FunFam" id="2.115.10.20:FF:000003">
    <property type="entry name" value="Levanbiose-producing levanase"/>
    <property type="match status" value="1"/>
</dbReference>
<dbReference type="Gene3D" id="2.60.120.560">
    <property type="entry name" value="Exo-inulinase, domain 1"/>
    <property type="match status" value="1"/>
</dbReference>
<dbReference type="Gene3D" id="2.115.10.20">
    <property type="entry name" value="Glycosyl hydrolase domain, family 43"/>
    <property type="match status" value="1"/>
</dbReference>
<dbReference type="InterPro" id="IPR013320">
    <property type="entry name" value="ConA-like_dom_sf"/>
</dbReference>
<dbReference type="InterPro" id="IPR001362">
    <property type="entry name" value="Glyco_hydro_32"/>
</dbReference>
<dbReference type="InterPro" id="IPR013189">
    <property type="entry name" value="Glyco_hydro_32_C"/>
</dbReference>
<dbReference type="InterPro" id="IPR013148">
    <property type="entry name" value="Glyco_hydro_32_N"/>
</dbReference>
<dbReference type="InterPro" id="IPR023296">
    <property type="entry name" value="Glyco_hydro_beta-prop_sf"/>
</dbReference>
<dbReference type="PANTHER" id="PTHR42800">
    <property type="entry name" value="EXOINULINASE INUD (AFU_ORTHOLOGUE AFUA_5G00480)"/>
    <property type="match status" value="1"/>
</dbReference>
<dbReference type="PANTHER" id="PTHR42800:SF1">
    <property type="entry name" value="EXOINULINASE INUD (AFU_ORTHOLOGUE AFUA_5G00480)"/>
    <property type="match status" value="1"/>
</dbReference>
<dbReference type="Pfam" id="PF08244">
    <property type="entry name" value="Glyco_hydro_32C"/>
    <property type="match status" value="1"/>
</dbReference>
<dbReference type="Pfam" id="PF00251">
    <property type="entry name" value="Glyco_hydro_32N"/>
    <property type="match status" value="1"/>
</dbReference>
<dbReference type="SMART" id="SM00640">
    <property type="entry name" value="Glyco_32"/>
    <property type="match status" value="1"/>
</dbReference>
<dbReference type="SUPFAM" id="SSF75005">
    <property type="entry name" value="Arabinanase/levansucrase/invertase"/>
    <property type="match status" value="1"/>
</dbReference>
<dbReference type="SUPFAM" id="SSF49899">
    <property type="entry name" value="Concanavalin A-like lectins/glucanases"/>
    <property type="match status" value="1"/>
</dbReference>
<accession>P94469</accession>
<keyword id="KW-0119">Carbohydrate metabolism</keyword>
<keyword id="KW-0326">Glycosidase</keyword>
<keyword id="KW-0378">Hydrolase</keyword>
<keyword id="KW-0472">Membrane</keyword>
<keyword id="KW-0812">Transmembrane</keyword>
<name>LEVB_GEOSE</name>
<evidence type="ECO:0000250" key="1"/>
<evidence type="ECO:0000255" key="2">
    <source>
        <dbReference type="PROSITE-ProRule" id="PRU10067"/>
    </source>
</evidence>
<evidence type="ECO:0000269" key="3">
    <source>
    </source>
</evidence>
<evidence type="ECO:0000305" key="4"/>
<gene>
    <name type="primary">levB</name>
    <name type="synonym">surC</name>
    <name type="synonym">surD</name>
</gene>
<comment type="function">
    <text evidence="1 3">Catalyzes the degradation of levan mainly into levanbiose (difructose) (By similarity). Can also hydrolyze inulin.</text>
</comment>
<comment type="catalytic activity">
    <reaction>
        <text>Hydrolysis of (2-&gt;6)-beta-D-fructofuranan, to remove successive disaccharide residues as levanbiose, i.e. 6-(beta-D-fructofuranosyl)-D-fructose, from the end of the chain.</text>
        <dbReference type="EC" id="3.2.1.64"/>
    </reaction>
</comment>
<comment type="biophysicochemical properties">
    <temperatureDependence>
        <text evidence="3">Optimum temperature is 55 degrees Celsius.</text>
    </temperatureDependence>
</comment>
<comment type="subcellular location">
    <subcellularLocation>
        <location evidence="1">Membrane</location>
        <topology evidence="1">Single-pass membrane protein</topology>
    </subcellularLocation>
</comment>
<comment type="similarity">
    <text evidence="4">Belongs to the glycosyl hydrolase 32 family.</text>
</comment>
<comment type="sequence caution" evidence="4">
    <conflict type="frameshift">
        <sequence resource="EMBL-CDS" id="AAB97112"/>
    </conflict>
</comment>
<organism>
    <name type="scientific">Geobacillus stearothermophilus</name>
    <name type="common">Bacillus stearothermophilus</name>
    <dbReference type="NCBI Taxonomy" id="1422"/>
    <lineage>
        <taxon>Bacteria</taxon>
        <taxon>Bacillati</taxon>
        <taxon>Bacillota</taxon>
        <taxon>Bacilli</taxon>
        <taxon>Bacillales</taxon>
        <taxon>Anoxybacillaceae</taxon>
        <taxon>Geobacillus</taxon>
    </lineage>
</organism>
<proteinExistence type="evidence at protein level"/>
<sequence>DPQKPIYFNGKYHYYYLYNRGYPKGNGTEWRHYVSDDLVHWTDEGVAIPKYTNPDGDIWTGSVVVDKENTAGFGKNALVAIVTQPSAKDKKQEQYLWYSTDKGKSFKFYSGNPVMPNPGTDDFRDPKVIWDDQDNKWVMVMAEGSKIGFYESDNLKDWHYTSGFFPEQTGMVECPDLYMMRASDGTNKWVLGASANGKPWGKPNTYAYWTGSFDGKEFKADQTEAQWLDYGFDWYGGVTFEDSKSTDPLEKRYALAWMNNWDYANNTPTMKNGFNGTDSVIREIRLKEQDGTYSLVSQPIEALEQLTVSTDEIEDQDVNGSKTLSITGDTYQLDTDLSWSELKNAGVRLRESEDQKRHIDVGIFAEDGYAYVNRAATNQPDKSNTYVESKAPYDV</sequence>
<feature type="chain" id="PRO_0000344253" description="Levanbiose-producing levanase">
    <location>
        <begin position="1" status="less than"/>
        <end position="395" status="greater than"/>
    </location>
</feature>
<feature type="active site" evidence="2">
    <location>
        <position position="1"/>
    </location>
</feature>
<feature type="binding site" evidence="1">
    <location>
        <begin position="59"/>
        <end position="60"/>
    </location>
    <ligand>
        <name>substrate</name>
    </ligand>
</feature>
<feature type="binding site" evidence="1">
    <location>
        <begin position="124"/>
        <end position="125"/>
    </location>
    <ligand>
        <name>substrate</name>
    </ligand>
</feature>
<feature type="binding site" evidence="1">
    <location>
        <position position="173"/>
    </location>
    <ligand>
        <name>substrate</name>
    </ligand>
</feature>
<feature type="binding site" evidence="1">
    <location>
        <position position="261"/>
    </location>
    <ligand>
        <name>substrate</name>
    </ligand>
</feature>
<feature type="non-terminal residue">
    <location>
        <position position="1"/>
    </location>
</feature>
<feature type="non-terminal residue">
    <location>
        <position position="395"/>
    </location>
</feature>
<protein>
    <recommendedName>
        <fullName>Levanbiose-producing levanase</fullName>
        <ecNumber>3.2.1.64</ecNumber>
    </recommendedName>
    <alternativeName>
        <fullName>2,6-beta-fructan 6-levanbiohydrolase</fullName>
    </alternativeName>
    <alternativeName>
        <fullName>Levanase</fullName>
    </alternativeName>
</protein>